<accession>B2IN15</accession>
<organism>
    <name type="scientific">Streptococcus pneumoniae (strain CGSP14)</name>
    <dbReference type="NCBI Taxonomy" id="516950"/>
    <lineage>
        <taxon>Bacteria</taxon>
        <taxon>Bacillati</taxon>
        <taxon>Bacillota</taxon>
        <taxon>Bacilli</taxon>
        <taxon>Lactobacillales</taxon>
        <taxon>Streptococcaceae</taxon>
        <taxon>Streptococcus</taxon>
    </lineage>
</organism>
<name>DAPH_STRPS</name>
<reference key="1">
    <citation type="journal article" date="2009" name="BMC Genomics">
        <title>Genome evolution driven by host adaptations results in a more virulent and antimicrobial-resistant Streptococcus pneumoniae serotype 14.</title>
        <authorList>
            <person name="Ding F."/>
            <person name="Tang P."/>
            <person name="Hsu M.-H."/>
            <person name="Cui P."/>
            <person name="Hu S."/>
            <person name="Yu J."/>
            <person name="Chiu C.-H."/>
        </authorList>
    </citation>
    <scope>NUCLEOTIDE SEQUENCE [LARGE SCALE GENOMIC DNA]</scope>
    <source>
        <strain>CGSP14</strain>
    </source>
</reference>
<protein>
    <recommendedName>
        <fullName evidence="1">2,3,4,5-tetrahydropyridine-2,6-dicarboxylate N-acetyltransferase</fullName>
        <ecNumber evidence="1">2.3.1.89</ecNumber>
    </recommendedName>
    <alternativeName>
        <fullName evidence="1">Tetrahydrodipicolinate N-acetyltransferase</fullName>
        <shortName evidence="1">THP acetyltransferase</shortName>
        <shortName evidence="1">Tetrahydropicolinate acetylase</shortName>
    </alternativeName>
</protein>
<proteinExistence type="inferred from homology"/>
<gene>
    <name evidence="1" type="primary">dapH</name>
    <name type="ordered locus">SPCG_2062</name>
</gene>
<dbReference type="EC" id="2.3.1.89" evidence="1"/>
<dbReference type="EMBL" id="CP001033">
    <property type="protein sequence ID" value="ACB91314.1"/>
    <property type="molecule type" value="Genomic_DNA"/>
</dbReference>
<dbReference type="RefSeq" id="WP_000127478.1">
    <property type="nucleotide sequence ID" value="NC_010582.1"/>
</dbReference>
<dbReference type="SMR" id="B2IN15"/>
<dbReference type="KEGG" id="spw:SPCG_2062"/>
<dbReference type="HOGENOM" id="CLU_103751_0_0_9"/>
<dbReference type="UniPathway" id="UPA00034">
    <property type="reaction ID" value="UER00022"/>
</dbReference>
<dbReference type="GO" id="GO:0047200">
    <property type="term" value="F:tetrahydrodipicolinate N-acetyltransferase activity"/>
    <property type="evidence" value="ECO:0007669"/>
    <property type="project" value="UniProtKB-EC"/>
</dbReference>
<dbReference type="GO" id="GO:0019877">
    <property type="term" value="P:diaminopimelate biosynthetic process"/>
    <property type="evidence" value="ECO:0007669"/>
    <property type="project" value="UniProtKB-UniRule"/>
</dbReference>
<dbReference type="GO" id="GO:0009089">
    <property type="term" value="P:lysine biosynthetic process via diaminopimelate"/>
    <property type="evidence" value="ECO:0007669"/>
    <property type="project" value="UniProtKB-UniRule"/>
</dbReference>
<dbReference type="Gene3D" id="2.160.10.10">
    <property type="entry name" value="Hexapeptide repeat proteins"/>
    <property type="match status" value="1"/>
</dbReference>
<dbReference type="Gene3D" id="3.30.70.250">
    <property type="entry name" value="Malonyl-CoA ACP transacylase, ACP-binding"/>
    <property type="match status" value="1"/>
</dbReference>
<dbReference type="HAMAP" id="MF_01691">
    <property type="entry name" value="DapH"/>
    <property type="match status" value="1"/>
</dbReference>
<dbReference type="InterPro" id="IPR019873">
    <property type="entry name" value="DapH"/>
</dbReference>
<dbReference type="InterPro" id="IPR013710">
    <property type="entry name" value="DapH_N"/>
</dbReference>
<dbReference type="InterPro" id="IPR001451">
    <property type="entry name" value="Hexapep"/>
</dbReference>
<dbReference type="InterPro" id="IPR018357">
    <property type="entry name" value="Hexapep_transf_CS"/>
</dbReference>
<dbReference type="InterPro" id="IPR050179">
    <property type="entry name" value="Trans_hexapeptide_repeat"/>
</dbReference>
<dbReference type="InterPro" id="IPR011004">
    <property type="entry name" value="Trimer_LpxA-like_sf"/>
</dbReference>
<dbReference type="NCBIfam" id="TIGR03532">
    <property type="entry name" value="DapD_Ac"/>
    <property type="match status" value="1"/>
</dbReference>
<dbReference type="PANTHER" id="PTHR43300:SF10">
    <property type="entry name" value="2,3,4,5-TETRAHYDROPYRIDINE-2,6-DICARBOXYLATE N-ACETYLTRANSFERASE"/>
    <property type="match status" value="1"/>
</dbReference>
<dbReference type="PANTHER" id="PTHR43300">
    <property type="entry name" value="ACETYLTRANSFERASE"/>
    <property type="match status" value="1"/>
</dbReference>
<dbReference type="Pfam" id="PF08503">
    <property type="entry name" value="DapH_N"/>
    <property type="match status" value="1"/>
</dbReference>
<dbReference type="Pfam" id="PF00132">
    <property type="entry name" value="Hexapep"/>
    <property type="match status" value="1"/>
</dbReference>
<dbReference type="Pfam" id="PF14602">
    <property type="entry name" value="Hexapep_2"/>
    <property type="match status" value="2"/>
</dbReference>
<dbReference type="SUPFAM" id="SSF51161">
    <property type="entry name" value="Trimeric LpxA-like enzymes"/>
    <property type="match status" value="1"/>
</dbReference>
<dbReference type="PROSITE" id="PS00101">
    <property type="entry name" value="HEXAPEP_TRANSFERASES"/>
    <property type="match status" value="2"/>
</dbReference>
<feature type="chain" id="PRO_0000376711" description="2,3,4,5-tetrahydropyridine-2,6-dicarboxylate N-acetyltransferase">
    <location>
        <begin position="1"/>
        <end position="232"/>
    </location>
</feature>
<keyword id="KW-0012">Acyltransferase</keyword>
<keyword id="KW-0028">Amino-acid biosynthesis</keyword>
<keyword id="KW-0220">Diaminopimelate biosynthesis</keyword>
<keyword id="KW-0457">Lysine biosynthesis</keyword>
<keyword id="KW-0677">Repeat</keyword>
<keyword id="KW-0808">Transferase</keyword>
<evidence type="ECO:0000255" key="1">
    <source>
        <dbReference type="HAMAP-Rule" id="MF_01691"/>
    </source>
</evidence>
<sequence length="232" mass="23936">MTATKMNAQEIIQFIANAEKKTSVKVTFEGQLATSVPSSVVKLGNVLFGDWKDVAPLLEGLVENQDYVVEQDARNSAVPLLDKRAINARIEPGAIIRDQVEIGDNAVIMMGAVINIGAEIGAGTMIDMGAILGGRAIVGKNSHVGAGAVLAGVIEPASAEPVRVGDNVLIGANAVVIEGVQIGSGSVVAAGAIVTQDVPENVVVAGVPARIIKEIDAQTQQKTALEDALRTL</sequence>
<comment type="function">
    <text evidence="1">Catalyzes the transfer of an acetyl group from acetyl-CoA to tetrahydrodipicolinate.</text>
</comment>
<comment type="catalytic activity">
    <reaction evidence="1">
        <text>(S)-2,3,4,5-tetrahydrodipicolinate + acetyl-CoA + H2O = L-2-acetamido-6-oxoheptanedioate + CoA</text>
        <dbReference type="Rhea" id="RHEA:13085"/>
        <dbReference type="ChEBI" id="CHEBI:15377"/>
        <dbReference type="ChEBI" id="CHEBI:16845"/>
        <dbReference type="ChEBI" id="CHEBI:57287"/>
        <dbReference type="ChEBI" id="CHEBI:57288"/>
        <dbReference type="ChEBI" id="CHEBI:58117"/>
        <dbReference type="EC" id="2.3.1.89"/>
    </reaction>
</comment>
<comment type="pathway">
    <text evidence="1">Amino-acid biosynthesis; L-lysine biosynthesis via DAP pathway; LL-2,6-diaminopimelate from (S)-tetrahydrodipicolinate (acetylase route): step 1/3.</text>
</comment>
<comment type="similarity">
    <text evidence="1">Belongs to the transferase hexapeptide repeat family. DapH subfamily.</text>
</comment>